<evidence type="ECO:0000255" key="1"/>
<evidence type="ECO:0000305" key="2"/>
<evidence type="ECO:0000305" key="3">
    <source>
    </source>
</evidence>
<name>YO392_YEAST</name>
<dbReference type="EMBL" id="Z75300">
    <property type="protein sequence ID" value="CAA99724.1"/>
    <property type="molecule type" value="Genomic_DNA"/>
</dbReference>
<dbReference type="PIR" id="S67304">
    <property type="entry name" value="S67304"/>
</dbReference>
<dbReference type="DIP" id="DIP-5341N"/>
<dbReference type="IntAct" id="Q08915">
    <property type="interactions" value="4"/>
</dbReference>
<dbReference type="STRING" id="4932.YOR392W"/>
<dbReference type="PaxDb" id="4932-YOR392W"/>
<dbReference type="EnsemblFungi" id="YOR392W_mRNA">
    <property type="protein sequence ID" value="YOR392W"/>
    <property type="gene ID" value="YOR392W"/>
</dbReference>
<dbReference type="AGR" id="SGD:S000005919"/>
<dbReference type="SGD" id="S000005919">
    <property type="gene designation" value="YOR392W"/>
</dbReference>
<dbReference type="HOGENOM" id="CLU_1769539_0_0_1"/>
<dbReference type="GO" id="GO:0016020">
    <property type="term" value="C:membrane"/>
    <property type="evidence" value="ECO:0007669"/>
    <property type="project" value="UniProtKB-SubCell"/>
</dbReference>
<gene>
    <name type="ordered locus">YOR392W</name>
    <name type="ORF">O6786</name>
</gene>
<keyword id="KW-0472">Membrane</keyword>
<keyword id="KW-0812">Transmembrane</keyword>
<keyword id="KW-1133">Transmembrane helix</keyword>
<comment type="subcellular location">
    <subcellularLocation>
        <location evidence="2">Membrane</location>
        <topology evidence="2">Single-pass membrane protein</topology>
    </subcellularLocation>
</comment>
<comment type="caution">
    <text evidence="3">Product of a dubious gene prediction unlikely to encode a functional protein. Because of that it is not part of the S.cerevisiae S288c complete/reference proteome set.</text>
</comment>
<feature type="chain" id="PRO_0000299745" description="Putative uncharacterized protein YOR392W">
    <location>
        <begin position="1"/>
        <end position="147"/>
    </location>
</feature>
<feature type="transmembrane region" description="Helical" evidence="1">
    <location>
        <begin position="69"/>
        <end position="89"/>
    </location>
</feature>
<sequence length="147" mass="16944">MKEKSVLEICFSSKYRCLEQAKKSRPVCATFLFSIKISRTDPLTVLIYQVSVLKSPNCDNCKNDSQKDIFFFLSLYLSSIKIPMLILNIFICSYAIFQIPHFTQEFLTGGWIFFKTRRLPVLDVRECAYCVISDSAPRKEILACSDL</sequence>
<proteinExistence type="uncertain"/>
<organism>
    <name type="scientific">Saccharomyces cerevisiae (strain ATCC 204508 / S288c)</name>
    <name type="common">Baker's yeast</name>
    <dbReference type="NCBI Taxonomy" id="559292"/>
    <lineage>
        <taxon>Eukaryota</taxon>
        <taxon>Fungi</taxon>
        <taxon>Dikarya</taxon>
        <taxon>Ascomycota</taxon>
        <taxon>Saccharomycotina</taxon>
        <taxon>Saccharomycetes</taxon>
        <taxon>Saccharomycetales</taxon>
        <taxon>Saccharomycetaceae</taxon>
        <taxon>Saccharomyces</taxon>
    </lineage>
</organism>
<accession>Q08915</accession>
<reference key="1">
    <citation type="journal article" date="1997" name="Nature">
        <title>The nucleotide sequence of Saccharomyces cerevisiae chromosome XV.</title>
        <authorList>
            <person name="Dujon B."/>
            <person name="Albermann K."/>
            <person name="Aldea M."/>
            <person name="Alexandraki D."/>
            <person name="Ansorge W."/>
            <person name="Arino J."/>
            <person name="Benes V."/>
            <person name="Bohn C."/>
            <person name="Bolotin-Fukuhara M."/>
            <person name="Bordonne R."/>
            <person name="Boyer J."/>
            <person name="Camasses A."/>
            <person name="Casamayor A."/>
            <person name="Casas C."/>
            <person name="Cheret G."/>
            <person name="Cziepluch C."/>
            <person name="Daignan-Fornier B."/>
            <person name="Dang V.-D."/>
            <person name="de Haan M."/>
            <person name="Delius H."/>
            <person name="Durand P."/>
            <person name="Fairhead C."/>
            <person name="Feldmann H."/>
            <person name="Gaillon L."/>
            <person name="Galisson F."/>
            <person name="Gamo F.-J."/>
            <person name="Gancedo C."/>
            <person name="Goffeau A."/>
            <person name="Goulding S.E."/>
            <person name="Grivell L.A."/>
            <person name="Habbig B."/>
            <person name="Hand N.J."/>
            <person name="Hani J."/>
            <person name="Hattenhorst U."/>
            <person name="Hebling U."/>
            <person name="Hernando Y."/>
            <person name="Herrero E."/>
            <person name="Heumann K."/>
            <person name="Hiesel R."/>
            <person name="Hilger F."/>
            <person name="Hofmann B."/>
            <person name="Hollenberg C.P."/>
            <person name="Hughes B."/>
            <person name="Jauniaux J.-C."/>
            <person name="Kalogeropoulos A."/>
            <person name="Katsoulou C."/>
            <person name="Kordes E."/>
            <person name="Lafuente M.J."/>
            <person name="Landt O."/>
            <person name="Louis E.J."/>
            <person name="Maarse A.C."/>
            <person name="Madania A."/>
            <person name="Mannhaupt G."/>
            <person name="Marck C."/>
            <person name="Martin R.P."/>
            <person name="Mewes H.-W."/>
            <person name="Michaux G."/>
            <person name="Paces V."/>
            <person name="Parle-McDermott A.G."/>
            <person name="Pearson B.M."/>
            <person name="Perrin A."/>
            <person name="Pettersson B."/>
            <person name="Poch O."/>
            <person name="Pohl T.M."/>
            <person name="Poirey R."/>
            <person name="Portetelle D."/>
            <person name="Pujol A."/>
            <person name="Purnelle B."/>
            <person name="Ramezani Rad M."/>
            <person name="Rechmann S."/>
            <person name="Schwager C."/>
            <person name="Schweizer M."/>
            <person name="Sor F."/>
            <person name="Sterky F."/>
            <person name="Tarassov I.A."/>
            <person name="Teodoru C."/>
            <person name="Tettelin H."/>
            <person name="Thierry A."/>
            <person name="Tobiasch E."/>
            <person name="Tzermia M."/>
            <person name="Uhlen M."/>
            <person name="Unseld M."/>
            <person name="Valens M."/>
            <person name="Vandenbol M."/>
            <person name="Vetter I."/>
            <person name="Vlcek C."/>
            <person name="Voet M."/>
            <person name="Volckaert G."/>
            <person name="Voss H."/>
            <person name="Wambutt R."/>
            <person name="Wedler H."/>
            <person name="Wiemann S."/>
            <person name="Winsor B."/>
            <person name="Wolfe K.H."/>
            <person name="Zollner A."/>
            <person name="Zumstein E."/>
            <person name="Kleine K."/>
        </authorList>
    </citation>
    <scope>NUCLEOTIDE SEQUENCE [LARGE SCALE GENOMIC DNA]</scope>
    <source>
        <strain>ATCC 204508 / S288c</strain>
    </source>
</reference>
<reference key="2">
    <citation type="journal article" date="2014" name="G3 (Bethesda)">
        <title>The reference genome sequence of Saccharomyces cerevisiae: Then and now.</title>
        <authorList>
            <person name="Engel S.R."/>
            <person name="Dietrich F.S."/>
            <person name="Fisk D.G."/>
            <person name="Binkley G."/>
            <person name="Balakrishnan R."/>
            <person name="Costanzo M.C."/>
            <person name="Dwight S.S."/>
            <person name="Hitz B.C."/>
            <person name="Karra K."/>
            <person name="Nash R.S."/>
            <person name="Weng S."/>
            <person name="Wong E.D."/>
            <person name="Lloyd P."/>
            <person name="Skrzypek M.S."/>
            <person name="Miyasato S.R."/>
            <person name="Simison M."/>
            <person name="Cherry J.M."/>
        </authorList>
    </citation>
    <scope>GENOME REANNOTATION</scope>
    <source>
        <strain>ATCC 204508 / S288c</strain>
    </source>
</reference>
<protein>
    <recommendedName>
        <fullName>Putative uncharacterized protein YOR392W</fullName>
    </recommendedName>
</protein>